<name>KORC_METTH</name>
<sequence>MIEVRKEIRIAGFGGQGVILAGIVLGKAASLYDGLYAVQTQSYGPEARGGASRAEVVISDHEIDYPKVQSPDILVAMSHQALLTYMDDLKRGGALIVDPDMVVEAEIEDFIRAREVKYFRAPATRTAEERVGITIVANMVMIGALTEATGIVSVRAAEEAIKDSVPPGTEEKNLMAFQAGRELIMEGSR</sequence>
<accession>O27114</accession>
<gene>
    <name type="primary">korC</name>
    <name type="ordered locus">MTH_1035</name>
</gene>
<keyword id="KW-0560">Oxidoreductase</keyword>
<keyword id="KW-1185">Reference proteome</keyword>
<dbReference type="EC" id="1.2.7.3"/>
<dbReference type="EMBL" id="AE000666">
    <property type="protein sequence ID" value="AAB85531.1"/>
    <property type="molecule type" value="Genomic_DNA"/>
</dbReference>
<dbReference type="PIR" id="B69005">
    <property type="entry name" value="B69005"/>
</dbReference>
<dbReference type="SMR" id="O27114"/>
<dbReference type="FunCoup" id="O27114">
    <property type="interactions" value="66"/>
</dbReference>
<dbReference type="STRING" id="187420.MTH_1035"/>
<dbReference type="PaxDb" id="187420-MTH_1035"/>
<dbReference type="EnsemblBacteria" id="AAB85531">
    <property type="protein sequence ID" value="AAB85531"/>
    <property type="gene ID" value="MTH_1035"/>
</dbReference>
<dbReference type="KEGG" id="mth:MTH_1035"/>
<dbReference type="PATRIC" id="fig|187420.15.peg.1018"/>
<dbReference type="HOGENOM" id="CLU_087284_0_0_2"/>
<dbReference type="InParanoid" id="O27114"/>
<dbReference type="Proteomes" id="UP000005223">
    <property type="component" value="Chromosome"/>
</dbReference>
<dbReference type="GO" id="GO:0047553">
    <property type="term" value="F:2-oxoglutarate synthase activity"/>
    <property type="evidence" value="ECO:0007669"/>
    <property type="project" value="UniProtKB-EC"/>
</dbReference>
<dbReference type="Gene3D" id="3.40.920.10">
    <property type="entry name" value="Pyruvate-ferredoxin oxidoreductase, PFOR, domain III"/>
    <property type="match status" value="1"/>
</dbReference>
<dbReference type="InterPro" id="IPR052554">
    <property type="entry name" value="2-oxoglutarate_synth_KorC"/>
</dbReference>
<dbReference type="InterPro" id="IPR011894">
    <property type="entry name" value="PorC_KorC"/>
</dbReference>
<dbReference type="InterPro" id="IPR019752">
    <property type="entry name" value="Pyrv/ketoisovalerate_OxRed_cat"/>
</dbReference>
<dbReference type="InterPro" id="IPR002869">
    <property type="entry name" value="Pyrv_flavodox_OxRed_cen"/>
</dbReference>
<dbReference type="NCBIfam" id="TIGR02175">
    <property type="entry name" value="PorC_KorC"/>
    <property type="match status" value="1"/>
</dbReference>
<dbReference type="NCBIfam" id="NF006323">
    <property type="entry name" value="PRK08537.1"/>
    <property type="match status" value="1"/>
</dbReference>
<dbReference type="PANTHER" id="PTHR42730">
    <property type="entry name" value="2-OXOGLUTARATE SYNTHASE SUBUNIT KORC"/>
    <property type="match status" value="1"/>
</dbReference>
<dbReference type="PANTHER" id="PTHR42730:SF1">
    <property type="entry name" value="2-OXOGLUTARATE SYNTHASE SUBUNIT KORC"/>
    <property type="match status" value="1"/>
</dbReference>
<dbReference type="Pfam" id="PF01558">
    <property type="entry name" value="POR"/>
    <property type="match status" value="1"/>
</dbReference>
<dbReference type="SUPFAM" id="SSF53323">
    <property type="entry name" value="Pyruvate-ferredoxin oxidoreductase, PFOR, domain III"/>
    <property type="match status" value="1"/>
</dbReference>
<feature type="chain" id="PRO_0000099947" description="2-oxoglutarate synthase subunit KorC">
    <location>
        <begin position="1"/>
        <end position="189"/>
    </location>
</feature>
<proteinExistence type="predicted"/>
<organism>
    <name type="scientific">Methanothermobacter thermautotrophicus (strain ATCC 29096 / DSM 1053 / JCM 10044 / NBRC 100330 / Delta H)</name>
    <name type="common">Methanobacterium thermoautotrophicum</name>
    <dbReference type="NCBI Taxonomy" id="187420"/>
    <lineage>
        <taxon>Archaea</taxon>
        <taxon>Methanobacteriati</taxon>
        <taxon>Methanobacteriota</taxon>
        <taxon>Methanomada group</taxon>
        <taxon>Methanobacteria</taxon>
        <taxon>Methanobacteriales</taxon>
        <taxon>Methanobacteriaceae</taxon>
        <taxon>Methanothermobacter</taxon>
    </lineage>
</organism>
<reference key="1">
    <citation type="journal article" date="1997" name="J. Bacteriol.">
        <title>Complete genome sequence of Methanobacterium thermoautotrophicum deltaH: functional analysis and comparative genomics.</title>
        <authorList>
            <person name="Smith D.R."/>
            <person name="Doucette-Stamm L.A."/>
            <person name="Deloughery C."/>
            <person name="Lee H.-M."/>
            <person name="Dubois J."/>
            <person name="Aldredge T."/>
            <person name="Bashirzadeh R."/>
            <person name="Blakely D."/>
            <person name="Cook R."/>
            <person name="Gilbert K."/>
            <person name="Harrison D."/>
            <person name="Hoang L."/>
            <person name="Keagle P."/>
            <person name="Lumm W."/>
            <person name="Pothier B."/>
            <person name="Qiu D."/>
            <person name="Spadafora R."/>
            <person name="Vicare R."/>
            <person name="Wang Y."/>
            <person name="Wierzbowski J."/>
            <person name="Gibson R."/>
            <person name="Jiwani N."/>
            <person name="Caruso A."/>
            <person name="Bush D."/>
            <person name="Safer H."/>
            <person name="Patwell D."/>
            <person name="Prabhakar S."/>
            <person name="McDougall S."/>
            <person name="Shimer G."/>
            <person name="Goyal A."/>
            <person name="Pietrovski S."/>
            <person name="Church G.M."/>
            <person name="Daniels C.J."/>
            <person name="Mao J.-I."/>
            <person name="Rice P."/>
            <person name="Noelling J."/>
            <person name="Reeve J.N."/>
        </authorList>
    </citation>
    <scope>NUCLEOTIDE SEQUENCE [LARGE SCALE GENOMIC DNA]</scope>
    <source>
        <strain>ATCC 29096 / DSM 1053 / JCM 10044 / NBRC 100330 / Delta H</strain>
    </source>
</reference>
<comment type="catalytic activity">
    <reaction>
        <text>2 oxidized [2Fe-2S]-[ferredoxin] + 2-oxoglutarate + CoA = succinyl-CoA + 2 reduced [2Fe-2S]-[ferredoxin] + CO2 + H(+)</text>
        <dbReference type="Rhea" id="RHEA:17297"/>
        <dbReference type="Rhea" id="RHEA-COMP:10000"/>
        <dbReference type="Rhea" id="RHEA-COMP:10001"/>
        <dbReference type="ChEBI" id="CHEBI:15378"/>
        <dbReference type="ChEBI" id="CHEBI:16526"/>
        <dbReference type="ChEBI" id="CHEBI:16810"/>
        <dbReference type="ChEBI" id="CHEBI:33737"/>
        <dbReference type="ChEBI" id="CHEBI:33738"/>
        <dbReference type="ChEBI" id="CHEBI:57287"/>
        <dbReference type="ChEBI" id="CHEBI:57292"/>
        <dbReference type="EC" id="1.2.7.3"/>
    </reaction>
</comment>
<comment type="subunit">
    <text>Heterotetramer of the KorA, KorB, KorC and KorD subunits.</text>
</comment>
<protein>
    <recommendedName>
        <fullName>2-oxoglutarate synthase subunit KorC</fullName>
        <ecNumber>1.2.7.3</ecNumber>
    </recommendedName>
    <alternativeName>
        <fullName>2-ketoglutarate oxidoreductase gamma chain</fullName>
        <shortName>KOR</shortName>
    </alternativeName>
    <alternativeName>
        <fullName>2-oxoglutarate-ferredoxin oxidoreductase subunit gamma</fullName>
    </alternativeName>
</protein>